<name>EFTS_MYCSK</name>
<dbReference type="EMBL" id="CP000518">
    <property type="protein sequence ID" value="ABL91239.1"/>
    <property type="molecule type" value="Genomic_DNA"/>
</dbReference>
<dbReference type="SMR" id="A1UEI1"/>
<dbReference type="STRING" id="189918.Mkms_2040"/>
<dbReference type="KEGG" id="mkm:Mkms_2040"/>
<dbReference type="HOGENOM" id="CLU_047155_0_0_11"/>
<dbReference type="OrthoDB" id="9808348at2"/>
<dbReference type="GO" id="GO:0005737">
    <property type="term" value="C:cytoplasm"/>
    <property type="evidence" value="ECO:0007669"/>
    <property type="project" value="UniProtKB-SubCell"/>
</dbReference>
<dbReference type="GO" id="GO:0003746">
    <property type="term" value="F:translation elongation factor activity"/>
    <property type="evidence" value="ECO:0007669"/>
    <property type="project" value="UniProtKB-UniRule"/>
</dbReference>
<dbReference type="CDD" id="cd14275">
    <property type="entry name" value="UBA_EF-Ts"/>
    <property type="match status" value="1"/>
</dbReference>
<dbReference type="FunFam" id="1.10.286.20:FF:000001">
    <property type="entry name" value="Elongation factor Ts"/>
    <property type="match status" value="1"/>
</dbReference>
<dbReference type="FunFam" id="1.10.8.10:FF:000001">
    <property type="entry name" value="Elongation factor Ts"/>
    <property type="match status" value="1"/>
</dbReference>
<dbReference type="Gene3D" id="1.10.286.20">
    <property type="match status" value="1"/>
</dbReference>
<dbReference type="Gene3D" id="1.10.8.10">
    <property type="entry name" value="DNA helicase RuvA subunit, C-terminal domain"/>
    <property type="match status" value="1"/>
</dbReference>
<dbReference type="Gene3D" id="3.30.479.20">
    <property type="entry name" value="Elongation factor Ts, dimerisation domain"/>
    <property type="match status" value="2"/>
</dbReference>
<dbReference type="HAMAP" id="MF_00050">
    <property type="entry name" value="EF_Ts"/>
    <property type="match status" value="1"/>
</dbReference>
<dbReference type="InterPro" id="IPR036402">
    <property type="entry name" value="EF-Ts_dimer_sf"/>
</dbReference>
<dbReference type="InterPro" id="IPR001816">
    <property type="entry name" value="Transl_elong_EFTs/EF1B"/>
</dbReference>
<dbReference type="InterPro" id="IPR014039">
    <property type="entry name" value="Transl_elong_EFTs/EF1B_dimer"/>
</dbReference>
<dbReference type="InterPro" id="IPR018101">
    <property type="entry name" value="Transl_elong_Ts_CS"/>
</dbReference>
<dbReference type="InterPro" id="IPR009060">
    <property type="entry name" value="UBA-like_sf"/>
</dbReference>
<dbReference type="NCBIfam" id="TIGR00116">
    <property type="entry name" value="tsf"/>
    <property type="match status" value="1"/>
</dbReference>
<dbReference type="PANTHER" id="PTHR11741">
    <property type="entry name" value="ELONGATION FACTOR TS"/>
    <property type="match status" value="1"/>
</dbReference>
<dbReference type="PANTHER" id="PTHR11741:SF0">
    <property type="entry name" value="ELONGATION FACTOR TS, MITOCHONDRIAL"/>
    <property type="match status" value="1"/>
</dbReference>
<dbReference type="Pfam" id="PF00889">
    <property type="entry name" value="EF_TS"/>
    <property type="match status" value="1"/>
</dbReference>
<dbReference type="SUPFAM" id="SSF54713">
    <property type="entry name" value="Elongation factor Ts (EF-Ts), dimerisation domain"/>
    <property type="match status" value="1"/>
</dbReference>
<dbReference type="SUPFAM" id="SSF46934">
    <property type="entry name" value="UBA-like"/>
    <property type="match status" value="1"/>
</dbReference>
<dbReference type="PROSITE" id="PS01126">
    <property type="entry name" value="EF_TS_1"/>
    <property type="match status" value="1"/>
</dbReference>
<dbReference type="PROSITE" id="PS01127">
    <property type="entry name" value="EF_TS_2"/>
    <property type="match status" value="1"/>
</dbReference>
<comment type="function">
    <text evidence="1">Associates with the EF-Tu.GDP complex and induces the exchange of GDP to GTP. It remains bound to the aminoacyl-tRNA.EF-Tu.GTP complex up to the GTP hydrolysis stage on the ribosome.</text>
</comment>
<comment type="subcellular location">
    <subcellularLocation>
        <location evidence="1">Cytoplasm</location>
    </subcellularLocation>
</comment>
<comment type="similarity">
    <text evidence="1">Belongs to the EF-Ts family.</text>
</comment>
<sequence>MANYTAADVKRLRELTGAGMMASKNALVEADGDFDKAVELLRIKGAKDVGKRAERATAEGLVAAKDGALIELNSETDFVAKNAEFQSVADQIVAAAAAAKATDIDALKAAKVGDTTVEQVIADLSAKIGEKLELRRVAYFDGNVETYLHKRAADLPPAVGVLVEYTGDGENGTEAAHAVALQIAALKAKYLTREDVPEDVVANERRIAEETARNEGKPEQALPKIVEGRVTGFYKDVVLLDQPSVSDNKKTVKALLDEAGVTVTRFVRFEVGQA</sequence>
<gene>
    <name evidence="1" type="primary">tsf</name>
    <name type="ordered locus">Mkms_2040</name>
</gene>
<organism>
    <name type="scientific">Mycobacterium sp. (strain KMS)</name>
    <dbReference type="NCBI Taxonomy" id="189918"/>
    <lineage>
        <taxon>Bacteria</taxon>
        <taxon>Bacillati</taxon>
        <taxon>Actinomycetota</taxon>
        <taxon>Actinomycetes</taxon>
        <taxon>Mycobacteriales</taxon>
        <taxon>Mycobacteriaceae</taxon>
        <taxon>Mycobacterium</taxon>
    </lineage>
</organism>
<feature type="chain" id="PRO_1000006130" description="Elongation factor Ts">
    <location>
        <begin position="1"/>
        <end position="274"/>
    </location>
</feature>
<feature type="region of interest" description="Involved in Mg(2+) ion dislocation from EF-Tu" evidence="1">
    <location>
        <begin position="76"/>
        <end position="79"/>
    </location>
</feature>
<protein>
    <recommendedName>
        <fullName evidence="1">Elongation factor Ts</fullName>
        <shortName evidence="1">EF-Ts</shortName>
    </recommendedName>
</protein>
<proteinExistence type="inferred from homology"/>
<evidence type="ECO:0000255" key="1">
    <source>
        <dbReference type="HAMAP-Rule" id="MF_00050"/>
    </source>
</evidence>
<reference key="1">
    <citation type="submission" date="2006-12" db="EMBL/GenBank/DDBJ databases">
        <title>Complete sequence of chromosome of Mycobacterium sp. KMS.</title>
        <authorList>
            <consortium name="US DOE Joint Genome Institute"/>
            <person name="Copeland A."/>
            <person name="Lucas S."/>
            <person name="Lapidus A."/>
            <person name="Barry K."/>
            <person name="Detter J.C."/>
            <person name="Glavina del Rio T."/>
            <person name="Hammon N."/>
            <person name="Israni S."/>
            <person name="Dalin E."/>
            <person name="Tice H."/>
            <person name="Pitluck S."/>
            <person name="Kiss H."/>
            <person name="Brettin T."/>
            <person name="Bruce D."/>
            <person name="Han C."/>
            <person name="Tapia R."/>
            <person name="Gilna P."/>
            <person name="Schmutz J."/>
            <person name="Larimer F."/>
            <person name="Land M."/>
            <person name="Hauser L."/>
            <person name="Kyrpides N."/>
            <person name="Mikhailova N."/>
            <person name="Miller C.D."/>
            <person name="Richardson P."/>
        </authorList>
    </citation>
    <scope>NUCLEOTIDE SEQUENCE [LARGE SCALE GENOMIC DNA]</scope>
    <source>
        <strain>KMS</strain>
    </source>
</reference>
<accession>A1UEI1</accession>
<keyword id="KW-0963">Cytoplasm</keyword>
<keyword id="KW-0251">Elongation factor</keyword>
<keyword id="KW-0648">Protein biosynthesis</keyword>